<keyword id="KW-0004">4Fe-4S</keyword>
<keyword id="KW-0408">Iron</keyword>
<keyword id="KW-0411">Iron-sulfur</keyword>
<keyword id="KW-0479">Metal-binding</keyword>
<keyword id="KW-0489">Methyltransferase</keyword>
<keyword id="KW-0698">rRNA processing</keyword>
<keyword id="KW-0949">S-adenosyl-L-methionine</keyword>
<keyword id="KW-0808">Transferase</keyword>
<dbReference type="EC" id="2.1.1.190" evidence="1"/>
<dbReference type="EMBL" id="CP000789">
    <property type="protein sequence ID" value="ABU72465.1"/>
    <property type="molecule type" value="Genomic_DNA"/>
</dbReference>
<dbReference type="RefSeq" id="WP_012128915.1">
    <property type="nucleotide sequence ID" value="NC_009783.1"/>
</dbReference>
<dbReference type="SMR" id="A7MTS9"/>
<dbReference type="KEGG" id="vha:VIBHAR_03529"/>
<dbReference type="PATRIC" id="fig|338187.25.peg.2681"/>
<dbReference type="Proteomes" id="UP000008152">
    <property type="component" value="Chromosome I"/>
</dbReference>
<dbReference type="GO" id="GO:0051539">
    <property type="term" value="F:4 iron, 4 sulfur cluster binding"/>
    <property type="evidence" value="ECO:0007669"/>
    <property type="project" value="UniProtKB-KW"/>
</dbReference>
<dbReference type="GO" id="GO:0005506">
    <property type="term" value="F:iron ion binding"/>
    <property type="evidence" value="ECO:0007669"/>
    <property type="project" value="UniProtKB-UniRule"/>
</dbReference>
<dbReference type="GO" id="GO:0003723">
    <property type="term" value="F:RNA binding"/>
    <property type="evidence" value="ECO:0007669"/>
    <property type="project" value="InterPro"/>
</dbReference>
<dbReference type="GO" id="GO:0070041">
    <property type="term" value="F:rRNA (uridine-C5-)-methyltransferase activity"/>
    <property type="evidence" value="ECO:0007669"/>
    <property type="project" value="UniProtKB-UniRule"/>
</dbReference>
<dbReference type="GO" id="GO:0070475">
    <property type="term" value="P:rRNA base methylation"/>
    <property type="evidence" value="ECO:0007669"/>
    <property type="project" value="TreeGrafter"/>
</dbReference>
<dbReference type="CDD" id="cd02440">
    <property type="entry name" value="AdoMet_MTases"/>
    <property type="match status" value="1"/>
</dbReference>
<dbReference type="FunFam" id="3.40.50.150:FF:000009">
    <property type="entry name" value="23S rRNA (Uracil(1939)-C(5))-methyltransferase RlmD"/>
    <property type="match status" value="1"/>
</dbReference>
<dbReference type="FunFam" id="2.40.50.140:FF:000097">
    <property type="entry name" value="23S rRNA (uracil(1939)-C(5))-methyltransferase RlmD"/>
    <property type="match status" value="1"/>
</dbReference>
<dbReference type="Gene3D" id="2.40.50.1070">
    <property type="match status" value="1"/>
</dbReference>
<dbReference type="Gene3D" id="2.40.50.140">
    <property type="entry name" value="Nucleic acid-binding proteins"/>
    <property type="match status" value="1"/>
</dbReference>
<dbReference type="Gene3D" id="3.40.50.150">
    <property type="entry name" value="Vaccinia Virus protein VP39"/>
    <property type="match status" value="1"/>
</dbReference>
<dbReference type="HAMAP" id="MF_01010">
    <property type="entry name" value="23SrRNA_methyltr_RlmD"/>
    <property type="match status" value="1"/>
</dbReference>
<dbReference type="InterPro" id="IPR001566">
    <property type="entry name" value="23S_rRNA_MeTrfase_RlmD"/>
</dbReference>
<dbReference type="InterPro" id="IPR030390">
    <property type="entry name" value="MeTrfase_TrmA_AS"/>
</dbReference>
<dbReference type="InterPro" id="IPR030391">
    <property type="entry name" value="MeTrfase_TrmA_CS"/>
</dbReference>
<dbReference type="InterPro" id="IPR012340">
    <property type="entry name" value="NA-bd_OB-fold"/>
</dbReference>
<dbReference type="InterPro" id="IPR029063">
    <property type="entry name" value="SAM-dependent_MTases_sf"/>
</dbReference>
<dbReference type="InterPro" id="IPR002792">
    <property type="entry name" value="TRAM_dom"/>
</dbReference>
<dbReference type="InterPro" id="IPR010280">
    <property type="entry name" value="U5_MeTrfase_fam"/>
</dbReference>
<dbReference type="NCBIfam" id="NF009639">
    <property type="entry name" value="PRK13168.1"/>
    <property type="match status" value="1"/>
</dbReference>
<dbReference type="NCBIfam" id="TIGR00479">
    <property type="entry name" value="rumA"/>
    <property type="match status" value="1"/>
</dbReference>
<dbReference type="PANTHER" id="PTHR11061:SF49">
    <property type="entry name" value="23S RRNA (URACIL(1939)-C(5))-METHYLTRANSFERASE RLMD"/>
    <property type="match status" value="1"/>
</dbReference>
<dbReference type="PANTHER" id="PTHR11061">
    <property type="entry name" value="RNA M5U METHYLTRANSFERASE"/>
    <property type="match status" value="1"/>
</dbReference>
<dbReference type="Pfam" id="PF01938">
    <property type="entry name" value="TRAM"/>
    <property type="match status" value="1"/>
</dbReference>
<dbReference type="Pfam" id="PF05958">
    <property type="entry name" value="tRNA_U5-meth_tr"/>
    <property type="match status" value="1"/>
</dbReference>
<dbReference type="SUPFAM" id="SSF50249">
    <property type="entry name" value="Nucleic acid-binding proteins"/>
    <property type="match status" value="1"/>
</dbReference>
<dbReference type="SUPFAM" id="SSF53335">
    <property type="entry name" value="S-adenosyl-L-methionine-dependent methyltransferases"/>
    <property type="match status" value="1"/>
</dbReference>
<dbReference type="PROSITE" id="PS51687">
    <property type="entry name" value="SAM_MT_RNA_M5U"/>
    <property type="match status" value="1"/>
</dbReference>
<dbReference type="PROSITE" id="PS50926">
    <property type="entry name" value="TRAM"/>
    <property type="match status" value="1"/>
</dbReference>
<dbReference type="PROSITE" id="PS01230">
    <property type="entry name" value="TRMA_1"/>
    <property type="match status" value="1"/>
</dbReference>
<dbReference type="PROSITE" id="PS01231">
    <property type="entry name" value="TRMA_2"/>
    <property type="match status" value="1"/>
</dbReference>
<comment type="function">
    <text evidence="1">Catalyzes the formation of 5-methyl-uridine at position 1939 (m5U1939) in 23S rRNA.</text>
</comment>
<comment type="catalytic activity">
    <reaction evidence="1">
        <text>uridine(1939) in 23S rRNA + S-adenosyl-L-methionine = 5-methyluridine(1939) in 23S rRNA + S-adenosyl-L-homocysteine + H(+)</text>
        <dbReference type="Rhea" id="RHEA:42908"/>
        <dbReference type="Rhea" id="RHEA-COMP:10278"/>
        <dbReference type="Rhea" id="RHEA-COMP:10279"/>
        <dbReference type="ChEBI" id="CHEBI:15378"/>
        <dbReference type="ChEBI" id="CHEBI:57856"/>
        <dbReference type="ChEBI" id="CHEBI:59789"/>
        <dbReference type="ChEBI" id="CHEBI:65315"/>
        <dbReference type="ChEBI" id="CHEBI:74447"/>
        <dbReference type="EC" id="2.1.1.190"/>
    </reaction>
</comment>
<comment type="similarity">
    <text evidence="1">Belongs to the class I-like SAM-binding methyltransferase superfamily. RNA M5U methyltransferase family. RlmD subfamily.</text>
</comment>
<accession>A7MTS9</accession>
<organism>
    <name type="scientific">Vibrio campbellii (strain ATCC BAA-1116)</name>
    <dbReference type="NCBI Taxonomy" id="2902295"/>
    <lineage>
        <taxon>Bacteria</taxon>
        <taxon>Pseudomonadati</taxon>
        <taxon>Pseudomonadota</taxon>
        <taxon>Gammaproteobacteria</taxon>
        <taxon>Vibrionales</taxon>
        <taxon>Vibrionaceae</taxon>
        <taxon>Vibrio</taxon>
    </lineage>
</organism>
<evidence type="ECO:0000255" key="1">
    <source>
        <dbReference type="HAMAP-Rule" id="MF_01010"/>
    </source>
</evidence>
<name>RLMD_VIBC1</name>
<proteinExistence type="inferred from homology"/>
<gene>
    <name evidence="1" type="primary">rlmD</name>
    <name type="synonym">rumA</name>
    <name type="ordered locus">VIBHAR_03529</name>
</gene>
<sequence>MARIFQPKKKTQLNTRHQAVQVERLDHHGAGIAYLKKKPLFIDGALPGEEVVTQLVEEKSKFARGKLIKILKPSEARVEPFCSHYHECGGCDLQHLNYDQQLTHKQQTLRQLMRKFAGSDIELGAPVLGESLGYRRRARVSLFVDKKTRQLHFGFRKKQSKQIAQVTDCPVLAPELNVLLPEIYSTLKAFKKPEQLGHVELVLGDNAPCITLRHLNKLTEKETNTLVELAKRHQASLYLMPETDQLDLVEGEVPFYQEAGVTVPFTPNNFIQVNQAVNQKMVAQAVDWLDPKSDERVLDLFCGLGNFSLPIAKRAKHVVGVEGVAEMVEKAVNNASLNQINNARFYHANLEQDFEGQVWAAEQFDKVLLDPARAGASGIIDQVSVLGARRIVYVSCNPATLARDSQSLLEQGYQLTKLGMLDMFPHTSHLESMALFEKS</sequence>
<feature type="chain" id="PRO_1000200861" description="23S rRNA (uracil(1939)-C(5))-methyltransferase RlmD">
    <location>
        <begin position="1"/>
        <end position="439"/>
    </location>
</feature>
<feature type="domain" description="TRAM" evidence="1">
    <location>
        <begin position="10"/>
        <end position="69"/>
    </location>
</feature>
<feature type="active site" description="Nucleophile" evidence="1">
    <location>
        <position position="396"/>
    </location>
</feature>
<feature type="binding site" evidence="1">
    <location>
        <position position="82"/>
    </location>
    <ligand>
        <name>[4Fe-4S] cluster</name>
        <dbReference type="ChEBI" id="CHEBI:49883"/>
    </ligand>
</feature>
<feature type="binding site" evidence="1">
    <location>
        <position position="88"/>
    </location>
    <ligand>
        <name>[4Fe-4S] cluster</name>
        <dbReference type="ChEBI" id="CHEBI:49883"/>
    </ligand>
</feature>
<feature type="binding site" evidence="1">
    <location>
        <position position="91"/>
    </location>
    <ligand>
        <name>[4Fe-4S] cluster</name>
        <dbReference type="ChEBI" id="CHEBI:49883"/>
    </ligand>
</feature>
<feature type="binding site" evidence="1">
    <location>
        <position position="169"/>
    </location>
    <ligand>
        <name>[4Fe-4S] cluster</name>
        <dbReference type="ChEBI" id="CHEBI:49883"/>
    </ligand>
</feature>
<feature type="binding site" evidence="1">
    <location>
        <position position="272"/>
    </location>
    <ligand>
        <name>S-adenosyl-L-methionine</name>
        <dbReference type="ChEBI" id="CHEBI:59789"/>
    </ligand>
</feature>
<feature type="binding site" evidence="1">
    <location>
        <position position="301"/>
    </location>
    <ligand>
        <name>S-adenosyl-L-methionine</name>
        <dbReference type="ChEBI" id="CHEBI:59789"/>
    </ligand>
</feature>
<feature type="binding site" evidence="1">
    <location>
        <position position="306"/>
    </location>
    <ligand>
        <name>S-adenosyl-L-methionine</name>
        <dbReference type="ChEBI" id="CHEBI:59789"/>
    </ligand>
</feature>
<feature type="binding site" evidence="1">
    <location>
        <position position="322"/>
    </location>
    <ligand>
        <name>S-adenosyl-L-methionine</name>
        <dbReference type="ChEBI" id="CHEBI:59789"/>
    </ligand>
</feature>
<feature type="binding site" evidence="1">
    <location>
        <position position="349"/>
    </location>
    <ligand>
        <name>S-adenosyl-L-methionine</name>
        <dbReference type="ChEBI" id="CHEBI:59789"/>
    </ligand>
</feature>
<feature type="binding site" evidence="1">
    <location>
        <position position="370"/>
    </location>
    <ligand>
        <name>S-adenosyl-L-methionine</name>
        <dbReference type="ChEBI" id="CHEBI:59789"/>
    </ligand>
</feature>
<protein>
    <recommendedName>
        <fullName evidence="1">23S rRNA (uracil(1939)-C(5))-methyltransferase RlmD</fullName>
        <ecNumber evidence="1">2.1.1.190</ecNumber>
    </recommendedName>
    <alternativeName>
        <fullName evidence="1">23S rRNA(m5U1939)-methyltransferase</fullName>
    </alternativeName>
</protein>
<reference key="1">
    <citation type="submission" date="2007-08" db="EMBL/GenBank/DDBJ databases">
        <authorList>
            <consortium name="The Vibrio harveyi Genome Sequencing Project"/>
            <person name="Bassler B."/>
            <person name="Clifton S.W."/>
            <person name="Fulton L."/>
            <person name="Delehaunty K."/>
            <person name="Fronick C."/>
            <person name="Harrison M."/>
            <person name="Markivic C."/>
            <person name="Fulton R."/>
            <person name="Tin-Wollam A.-M."/>
            <person name="Shah N."/>
            <person name="Pepin K."/>
            <person name="Nash W."/>
            <person name="Thiruvilangam P."/>
            <person name="Bhonagiri V."/>
            <person name="Waters C."/>
            <person name="Tu K.C."/>
            <person name="Irgon J."/>
            <person name="Wilson R.K."/>
        </authorList>
    </citation>
    <scope>NUCLEOTIDE SEQUENCE [LARGE SCALE GENOMIC DNA]</scope>
    <source>
        <strain>ATCC BAA-1116 / BB120</strain>
    </source>
</reference>